<feature type="chain" id="PRO_1000075136" description="Elongation factor 4">
    <location>
        <begin position="1"/>
        <end position="601"/>
    </location>
</feature>
<feature type="domain" description="tr-type G">
    <location>
        <begin position="7"/>
        <end position="189"/>
    </location>
</feature>
<feature type="binding site" evidence="1">
    <location>
        <begin position="19"/>
        <end position="24"/>
    </location>
    <ligand>
        <name>GTP</name>
        <dbReference type="ChEBI" id="CHEBI:37565"/>
    </ligand>
</feature>
<feature type="binding site" evidence="1">
    <location>
        <begin position="136"/>
        <end position="139"/>
    </location>
    <ligand>
        <name>GTP</name>
        <dbReference type="ChEBI" id="CHEBI:37565"/>
    </ligand>
</feature>
<accession>A9HG78</accession>
<accession>B5ZEI0</accession>
<dbReference type="EC" id="3.6.5.n1" evidence="1"/>
<dbReference type="EMBL" id="AM889285">
    <property type="protein sequence ID" value="CAP55459.1"/>
    <property type="molecule type" value="Genomic_DNA"/>
</dbReference>
<dbReference type="EMBL" id="CP001189">
    <property type="protein sequence ID" value="ACI51970.1"/>
    <property type="molecule type" value="Genomic_DNA"/>
</dbReference>
<dbReference type="RefSeq" id="WP_012224887.1">
    <property type="nucleotide sequence ID" value="NC_010125.1"/>
</dbReference>
<dbReference type="SMR" id="A9HG78"/>
<dbReference type="STRING" id="272568.GDI1516"/>
<dbReference type="KEGG" id="gdi:GDI1516"/>
<dbReference type="KEGG" id="gdj:Gdia_2212"/>
<dbReference type="eggNOG" id="COG0481">
    <property type="taxonomic scope" value="Bacteria"/>
</dbReference>
<dbReference type="HOGENOM" id="CLU_009995_3_3_5"/>
<dbReference type="OrthoDB" id="9802948at2"/>
<dbReference type="Proteomes" id="UP000001176">
    <property type="component" value="Chromosome"/>
</dbReference>
<dbReference type="GO" id="GO:0005886">
    <property type="term" value="C:plasma membrane"/>
    <property type="evidence" value="ECO:0007669"/>
    <property type="project" value="UniProtKB-SubCell"/>
</dbReference>
<dbReference type="GO" id="GO:0005525">
    <property type="term" value="F:GTP binding"/>
    <property type="evidence" value="ECO:0007669"/>
    <property type="project" value="UniProtKB-UniRule"/>
</dbReference>
<dbReference type="GO" id="GO:0003924">
    <property type="term" value="F:GTPase activity"/>
    <property type="evidence" value="ECO:0007669"/>
    <property type="project" value="UniProtKB-UniRule"/>
</dbReference>
<dbReference type="GO" id="GO:0097216">
    <property type="term" value="F:guanosine tetraphosphate binding"/>
    <property type="evidence" value="ECO:0007669"/>
    <property type="project" value="UniProtKB-ARBA"/>
</dbReference>
<dbReference type="GO" id="GO:0043022">
    <property type="term" value="F:ribosome binding"/>
    <property type="evidence" value="ECO:0007669"/>
    <property type="project" value="UniProtKB-UniRule"/>
</dbReference>
<dbReference type="GO" id="GO:0003746">
    <property type="term" value="F:translation elongation factor activity"/>
    <property type="evidence" value="ECO:0007669"/>
    <property type="project" value="UniProtKB-UniRule"/>
</dbReference>
<dbReference type="GO" id="GO:0045727">
    <property type="term" value="P:positive regulation of translation"/>
    <property type="evidence" value="ECO:0007669"/>
    <property type="project" value="UniProtKB-UniRule"/>
</dbReference>
<dbReference type="CDD" id="cd03699">
    <property type="entry name" value="EF4_II"/>
    <property type="match status" value="1"/>
</dbReference>
<dbReference type="CDD" id="cd16260">
    <property type="entry name" value="EF4_III"/>
    <property type="match status" value="1"/>
</dbReference>
<dbReference type="CDD" id="cd01890">
    <property type="entry name" value="LepA"/>
    <property type="match status" value="1"/>
</dbReference>
<dbReference type="CDD" id="cd03709">
    <property type="entry name" value="lepA_C"/>
    <property type="match status" value="1"/>
</dbReference>
<dbReference type="FunFam" id="3.40.50.300:FF:000078">
    <property type="entry name" value="Elongation factor 4"/>
    <property type="match status" value="1"/>
</dbReference>
<dbReference type="FunFam" id="2.40.30.10:FF:000015">
    <property type="entry name" value="Translation factor GUF1, mitochondrial"/>
    <property type="match status" value="1"/>
</dbReference>
<dbReference type="FunFam" id="3.30.70.240:FF:000007">
    <property type="entry name" value="Translation factor GUF1, mitochondrial"/>
    <property type="match status" value="1"/>
</dbReference>
<dbReference type="FunFam" id="3.30.70.2570:FF:000001">
    <property type="entry name" value="Translation factor GUF1, mitochondrial"/>
    <property type="match status" value="1"/>
</dbReference>
<dbReference type="FunFam" id="3.30.70.870:FF:000004">
    <property type="entry name" value="Translation factor GUF1, mitochondrial"/>
    <property type="match status" value="1"/>
</dbReference>
<dbReference type="Gene3D" id="3.30.70.240">
    <property type="match status" value="1"/>
</dbReference>
<dbReference type="Gene3D" id="3.30.70.2570">
    <property type="entry name" value="Elongation factor 4, C-terminal domain"/>
    <property type="match status" value="1"/>
</dbReference>
<dbReference type="Gene3D" id="3.30.70.870">
    <property type="entry name" value="Elongation Factor G (Translational Gtpase), domain 3"/>
    <property type="match status" value="1"/>
</dbReference>
<dbReference type="Gene3D" id="3.40.50.300">
    <property type="entry name" value="P-loop containing nucleotide triphosphate hydrolases"/>
    <property type="match status" value="1"/>
</dbReference>
<dbReference type="Gene3D" id="2.40.30.10">
    <property type="entry name" value="Translation factors"/>
    <property type="match status" value="1"/>
</dbReference>
<dbReference type="HAMAP" id="MF_00071">
    <property type="entry name" value="LepA"/>
    <property type="match status" value="1"/>
</dbReference>
<dbReference type="InterPro" id="IPR006297">
    <property type="entry name" value="EF-4"/>
</dbReference>
<dbReference type="InterPro" id="IPR035647">
    <property type="entry name" value="EFG_III/V"/>
</dbReference>
<dbReference type="InterPro" id="IPR000640">
    <property type="entry name" value="EFG_V-like"/>
</dbReference>
<dbReference type="InterPro" id="IPR004161">
    <property type="entry name" value="EFTu-like_2"/>
</dbReference>
<dbReference type="InterPro" id="IPR031157">
    <property type="entry name" value="G_TR_CS"/>
</dbReference>
<dbReference type="InterPro" id="IPR038363">
    <property type="entry name" value="LepA_C_sf"/>
</dbReference>
<dbReference type="InterPro" id="IPR013842">
    <property type="entry name" value="LepA_CTD"/>
</dbReference>
<dbReference type="InterPro" id="IPR035654">
    <property type="entry name" value="LepA_IV"/>
</dbReference>
<dbReference type="InterPro" id="IPR027417">
    <property type="entry name" value="P-loop_NTPase"/>
</dbReference>
<dbReference type="InterPro" id="IPR005225">
    <property type="entry name" value="Small_GTP-bd"/>
</dbReference>
<dbReference type="InterPro" id="IPR000795">
    <property type="entry name" value="T_Tr_GTP-bd_dom"/>
</dbReference>
<dbReference type="NCBIfam" id="TIGR01393">
    <property type="entry name" value="lepA"/>
    <property type="match status" value="1"/>
</dbReference>
<dbReference type="NCBIfam" id="TIGR00231">
    <property type="entry name" value="small_GTP"/>
    <property type="match status" value="1"/>
</dbReference>
<dbReference type="PANTHER" id="PTHR43512:SF4">
    <property type="entry name" value="TRANSLATION FACTOR GUF1 HOMOLOG, CHLOROPLASTIC"/>
    <property type="match status" value="1"/>
</dbReference>
<dbReference type="PANTHER" id="PTHR43512">
    <property type="entry name" value="TRANSLATION FACTOR GUF1-RELATED"/>
    <property type="match status" value="1"/>
</dbReference>
<dbReference type="Pfam" id="PF00679">
    <property type="entry name" value="EFG_C"/>
    <property type="match status" value="1"/>
</dbReference>
<dbReference type="Pfam" id="PF00009">
    <property type="entry name" value="GTP_EFTU"/>
    <property type="match status" value="1"/>
</dbReference>
<dbReference type="Pfam" id="PF03144">
    <property type="entry name" value="GTP_EFTU_D2"/>
    <property type="match status" value="1"/>
</dbReference>
<dbReference type="Pfam" id="PF06421">
    <property type="entry name" value="LepA_C"/>
    <property type="match status" value="1"/>
</dbReference>
<dbReference type="PRINTS" id="PR00315">
    <property type="entry name" value="ELONGATNFCT"/>
</dbReference>
<dbReference type="SMART" id="SM00838">
    <property type="entry name" value="EFG_C"/>
    <property type="match status" value="1"/>
</dbReference>
<dbReference type="SUPFAM" id="SSF54980">
    <property type="entry name" value="EF-G C-terminal domain-like"/>
    <property type="match status" value="2"/>
</dbReference>
<dbReference type="SUPFAM" id="SSF52540">
    <property type="entry name" value="P-loop containing nucleoside triphosphate hydrolases"/>
    <property type="match status" value="1"/>
</dbReference>
<dbReference type="PROSITE" id="PS00301">
    <property type="entry name" value="G_TR_1"/>
    <property type="match status" value="1"/>
</dbReference>
<dbReference type="PROSITE" id="PS51722">
    <property type="entry name" value="G_TR_2"/>
    <property type="match status" value="1"/>
</dbReference>
<protein>
    <recommendedName>
        <fullName evidence="1">Elongation factor 4</fullName>
        <shortName evidence="1">EF-4</shortName>
        <ecNumber evidence="1">3.6.5.n1</ecNumber>
    </recommendedName>
    <alternativeName>
        <fullName evidence="1">Ribosomal back-translocase LepA</fullName>
    </alternativeName>
</protein>
<organism>
    <name type="scientific">Gluconacetobacter diazotrophicus (strain ATCC 49037 / DSM 5601 / CCUG 37298 / CIP 103539 / LMG 7603 / PAl5)</name>
    <dbReference type="NCBI Taxonomy" id="272568"/>
    <lineage>
        <taxon>Bacteria</taxon>
        <taxon>Pseudomonadati</taxon>
        <taxon>Pseudomonadota</taxon>
        <taxon>Alphaproteobacteria</taxon>
        <taxon>Acetobacterales</taxon>
        <taxon>Acetobacteraceae</taxon>
        <taxon>Gluconacetobacter</taxon>
    </lineage>
</organism>
<keyword id="KW-0997">Cell inner membrane</keyword>
<keyword id="KW-1003">Cell membrane</keyword>
<keyword id="KW-0342">GTP-binding</keyword>
<keyword id="KW-0378">Hydrolase</keyword>
<keyword id="KW-0472">Membrane</keyword>
<keyword id="KW-0547">Nucleotide-binding</keyword>
<keyword id="KW-0648">Protein biosynthesis</keyword>
<keyword id="KW-1185">Reference proteome</keyword>
<gene>
    <name evidence="1" type="primary">lepA</name>
    <name type="ordered locus">GDI1516</name>
    <name type="ordered locus">Gdia_2212</name>
</gene>
<sequence length="601" mass="66420">MTDTPLSLIRNFSIIAHIDHGKSTLADRLIQACGALTAREMTNQVLDNMELERERGITIKAQTVRLSYPAKDGKTYVLNLMDTPGHVDFAYEVSRSLAACEGSLLVVDASQGVEAQTLANVYQAIDANHEIVPVLNKVDLPAAEPERVKAQIEEVIGIPADDAVEISAKTGLNIEGVLEALVTRLPPPVGDESKPLQALLVDSWYDPYLGVIILVRIKEGRLRKGSRIRMMSNGAVYHVDQVGVFAPRMVPVDDLGPGEMGYINAAIKTVADCNVGDTITDDRHPAERALAGFKPSIPVVWCGLYPIDADDFEKLRDSLSKLRLNDASFHYEAETSAALGFGFRCGFLGLLHLEIIQERLSREFNLDLIATAPSVVYRLYRTNGGMEELHNPADMPDGSVVEKIEEPWITATIMVPDDYLGAVLTLCSERRGIQKDLTYVGTRAMAVYRLPLNEVVFDFYDRLKSVSRGYASFDYQMDGYEESDLVRISILVNQEPVDALAFIAHRSAAESRGRSICAKLKELIPRQLFKIAIQAAIGSRVIARETIGALSKDVTAKCYGGDISRKRKLLEKQKEGKKRMRQFGKVEIPQSAFLAALKMDH</sequence>
<name>LEPA_GLUDA</name>
<evidence type="ECO:0000255" key="1">
    <source>
        <dbReference type="HAMAP-Rule" id="MF_00071"/>
    </source>
</evidence>
<reference key="1">
    <citation type="journal article" date="2009" name="BMC Genomics">
        <title>Complete genome sequence of the sugarcane nitrogen-fixing endophyte Gluconacetobacter diazotrophicus Pal5.</title>
        <authorList>
            <person name="Bertalan M."/>
            <person name="Albano R."/>
            <person name="de Padua V."/>
            <person name="Rouws L."/>
            <person name="Rojas C."/>
            <person name="Hemerly A."/>
            <person name="Teixeira K."/>
            <person name="Schwab S."/>
            <person name="Araujo J."/>
            <person name="Oliveira A."/>
            <person name="Franca L."/>
            <person name="Magalhaes V."/>
            <person name="Alqueres S."/>
            <person name="Cardoso A."/>
            <person name="Almeida W."/>
            <person name="Loureiro M.M."/>
            <person name="Nogueira E."/>
            <person name="Cidade D."/>
            <person name="Oliveira D."/>
            <person name="Simao T."/>
            <person name="Macedo J."/>
            <person name="Valadao A."/>
            <person name="Dreschsel M."/>
            <person name="Freitas F."/>
            <person name="Vidal M."/>
            <person name="Guedes H."/>
            <person name="Rodrigues E."/>
            <person name="Meneses C."/>
            <person name="Brioso P."/>
            <person name="Pozzer L."/>
            <person name="Figueiredo D."/>
            <person name="Montano H."/>
            <person name="Junior J."/>
            <person name="de Souza Filho G."/>
            <person name="Martin Quintana Flores V."/>
            <person name="Ferreira B."/>
            <person name="Branco A."/>
            <person name="Gonzalez P."/>
            <person name="Guillobel H."/>
            <person name="Lemos M."/>
            <person name="Seibel L."/>
            <person name="Macedo J."/>
            <person name="Alves-Ferreira M."/>
            <person name="Sachetto-Martins G."/>
            <person name="Coelho A."/>
            <person name="Santos E."/>
            <person name="Amaral G."/>
            <person name="Neves A."/>
            <person name="Pacheco A.B."/>
            <person name="Carvalho D."/>
            <person name="Lery L."/>
            <person name="Bisch P."/>
            <person name="Rossle S.C."/>
            <person name="Urmenyi T."/>
            <person name="Rael Pereira A."/>
            <person name="Silva R."/>
            <person name="Rondinelli E."/>
            <person name="von Kruger W."/>
            <person name="Martins O."/>
            <person name="Baldani J.I."/>
            <person name="Ferreira P.C."/>
        </authorList>
    </citation>
    <scope>NUCLEOTIDE SEQUENCE [LARGE SCALE GENOMIC DNA]</scope>
    <source>
        <strain>ATCC 49037 / DSM 5601 / CCUG 37298 / CIP 103539 / LMG 7603 / PAl5</strain>
    </source>
</reference>
<reference key="2">
    <citation type="journal article" date="2010" name="Stand. Genomic Sci.">
        <title>Two genome sequences of the same bacterial strain, Gluconacetobacter diazotrophicus PAl 5, suggest a new standard in genome sequence submission.</title>
        <authorList>
            <person name="Giongo A."/>
            <person name="Tyler H.L."/>
            <person name="Zipperer U.N."/>
            <person name="Triplett E.W."/>
        </authorList>
    </citation>
    <scope>NUCLEOTIDE SEQUENCE [LARGE SCALE GENOMIC DNA]</scope>
    <source>
        <strain>ATCC 49037 / DSM 5601 / CCUG 37298 / CIP 103539 / LMG 7603 / PAl5</strain>
    </source>
</reference>
<comment type="function">
    <text evidence="1">Required for accurate and efficient protein synthesis under certain stress conditions. May act as a fidelity factor of the translation reaction, by catalyzing a one-codon backward translocation of tRNAs on improperly translocated ribosomes. Back-translocation proceeds from a post-translocation (POST) complex to a pre-translocation (PRE) complex, thus giving elongation factor G a second chance to translocate the tRNAs correctly. Binds to ribosomes in a GTP-dependent manner.</text>
</comment>
<comment type="catalytic activity">
    <reaction evidence="1">
        <text>GTP + H2O = GDP + phosphate + H(+)</text>
        <dbReference type="Rhea" id="RHEA:19669"/>
        <dbReference type="ChEBI" id="CHEBI:15377"/>
        <dbReference type="ChEBI" id="CHEBI:15378"/>
        <dbReference type="ChEBI" id="CHEBI:37565"/>
        <dbReference type="ChEBI" id="CHEBI:43474"/>
        <dbReference type="ChEBI" id="CHEBI:58189"/>
        <dbReference type="EC" id="3.6.5.n1"/>
    </reaction>
</comment>
<comment type="subcellular location">
    <subcellularLocation>
        <location evidence="1">Cell inner membrane</location>
        <topology evidence="1">Peripheral membrane protein</topology>
        <orientation evidence="1">Cytoplasmic side</orientation>
    </subcellularLocation>
</comment>
<comment type="similarity">
    <text evidence="1">Belongs to the TRAFAC class translation factor GTPase superfamily. Classic translation factor GTPase family. LepA subfamily.</text>
</comment>
<proteinExistence type="inferred from homology"/>